<keyword id="KW-0963">Cytoplasm</keyword>
<keyword id="KW-0217">Developmental protein</keyword>
<keyword id="KW-0238">DNA-binding</keyword>
<keyword id="KW-0539">Nucleus</keyword>
<keyword id="KW-1185">Reference proteome</keyword>
<keyword id="KW-0804">Transcription</keyword>
<keyword id="KW-0805">Transcription regulation</keyword>
<sequence length="350" mass="38967">MVGSLIMEEDIYLDLFLDPYTIQDDFPPAMSQLFSPGVPLDMHSLPSNPETVFHPHLGGVKKASTDFSSVDLSFLPDELTQENRDQTVTGNKLASEESCRTRDRQSQLQLPDEHGSELNLNSNSSPDPQSCLCFDDAHSNQPSPETPNSNALPVALIASMMPMNPVPGFSGIVPQLQNVVSTANLACKLDLRKIALNAKNTEYNPKRFAAVIMRIREPRTTALIFSSGKVVCTGAKSEEESRLAARKYARVVQKLGFPVRFFNFKIQNMVGSCDVKFPIRLEILALTHRQFSSSYEPELFPGLIYKMVKPQVVLLIFASGKVVLTGAKERSEIYEAFENMYPILESFKKV</sequence>
<organism>
    <name type="scientific">Mus musculus</name>
    <name type="common">Mouse</name>
    <dbReference type="NCBI Taxonomy" id="10090"/>
    <lineage>
        <taxon>Eukaryota</taxon>
        <taxon>Metazoa</taxon>
        <taxon>Chordata</taxon>
        <taxon>Craniata</taxon>
        <taxon>Vertebrata</taxon>
        <taxon>Euteleostomi</taxon>
        <taxon>Mammalia</taxon>
        <taxon>Eutheria</taxon>
        <taxon>Euarchontoglires</taxon>
        <taxon>Glires</taxon>
        <taxon>Rodentia</taxon>
        <taxon>Myomorpha</taxon>
        <taxon>Muroidea</taxon>
        <taxon>Muridae</taxon>
        <taxon>Murinae</taxon>
        <taxon>Mus</taxon>
        <taxon>Mus</taxon>
    </lineage>
</organism>
<name>TBPL2_MOUSE</name>
<proteinExistence type="evidence at protein level"/>
<comment type="function">
    <text evidence="7">Transcription factor required in complex with TAF3 for the differentiation of myoblasts into myocytes. The complex replaces TFIID at specific promoters at an early stage in the differentiation process.</text>
</comment>
<comment type="subunit">
    <text evidence="7">Interacts with TAF3.</text>
</comment>
<comment type="interaction">
    <interactant intactId="EBI-1571412">
        <id>Q6SJ95</id>
    </interactant>
    <interactant intactId="EBI-1561080">
        <id>Q5HZG4</id>
        <label>Taf3</label>
    </interactant>
    <organismsDiffer>false</organismsDiffer>
    <experiments>3</experiments>
</comment>
<comment type="subcellular location">
    <subcellularLocation>
        <location evidence="1 7">Cytoplasm</location>
    </subcellularLocation>
    <subcellularLocation>
        <location evidence="1 7">Nucleus</location>
    </subcellularLocation>
    <text evidence="1">Present in the cytoplasm during cytokinesis.</text>
</comment>
<comment type="tissue specificity">
    <text evidence="4 5 6 7">Expressed in myotubes and myofibers (at protein level). Expressed in a wide variety of tissues with highest levels in heart, lung, liver, uterus and placenta and especially the gonads. Expression is higher in the ovary than the testis, and within the ovary expression is localized to the oocytes.</text>
</comment>
<comment type="similarity">
    <text evidence="2">Belongs to the TBP family.</text>
</comment>
<dbReference type="EMBL" id="AY457924">
    <property type="protein sequence ID" value="AAR24282.1"/>
    <property type="molecule type" value="mRNA"/>
</dbReference>
<dbReference type="EMBL" id="BK005773">
    <property type="protein sequence ID" value="DAA06033.1"/>
    <property type="molecule type" value="mRNA"/>
</dbReference>
<dbReference type="EMBL" id="AL844838">
    <property type="protein sequence ID" value="CAM19020.1"/>
    <property type="molecule type" value="Genomic_DNA"/>
</dbReference>
<dbReference type="EMBL" id="AL844838">
    <property type="protein sequence ID" value="CAM19021.1"/>
    <property type="molecule type" value="Genomic_DNA"/>
</dbReference>
<dbReference type="EMBL" id="BC100305">
    <property type="protein sequence ID" value="AAI00306.1"/>
    <property type="molecule type" value="mRNA"/>
</dbReference>
<dbReference type="EMBL" id="BC119160">
    <property type="protein sequence ID" value="AAI19161.1"/>
    <property type="molecule type" value="mRNA"/>
</dbReference>
<dbReference type="CCDS" id="CCDS15732.1"/>
<dbReference type="RefSeq" id="NP_001276618.1">
    <property type="nucleotide sequence ID" value="NM_001289689.1"/>
</dbReference>
<dbReference type="RefSeq" id="NP_951014.1">
    <property type="nucleotide sequence ID" value="NM_199059.2"/>
</dbReference>
<dbReference type="SMR" id="Q6SJ95"/>
<dbReference type="FunCoup" id="Q6SJ95">
    <property type="interactions" value="166"/>
</dbReference>
<dbReference type="IntAct" id="Q6SJ95">
    <property type="interactions" value="1"/>
</dbReference>
<dbReference type="STRING" id="10090.ENSMUSP00000079309"/>
<dbReference type="PhosphoSitePlus" id="Q6SJ95"/>
<dbReference type="PaxDb" id="10090-ENSMUSP00000079309"/>
<dbReference type="ProteomicsDB" id="254832"/>
<dbReference type="Pumba" id="Q6SJ95"/>
<dbReference type="Antibodypedia" id="61077">
    <property type="antibodies" value="122 antibodies from 22 providers"/>
</dbReference>
<dbReference type="DNASU" id="227606"/>
<dbReference type="Ensembl" id="ENSMUST00000080453.8">
    <property type="protein sequence ID" value="ENSMUSP00000079309.2"/>
    <property type="gene ID" value="ENSMUSG00000061809.9"/>
</dbReference>
<dbReference type="GeneID" id="227606"/>
<dbReference type="KEGG" id="mmu:227606"/>
<dbReference type="UCSC" id="uc008iol.2">
    <property type="organism name" value="mouse"/>
</dbReference>
<dbReference type="AGR" id="MGI:2684058"/>
<dbReference type="CTD" id="387332"/>
<dbReference type="MGI" id="MGI:2684058">
    <property type="gene designation" value="Tbpl2"/>
</dbReference>
<dbReference type="VEuPathDB" id="HostDB:ENSMUSG00000061809"/>
<dbReference type="eggNOG" id="KOG3302">
    <property type="taxonomic scope" value="Eukaryota"/>
</dbReference>
<dbReference type="GeneTree" id="ENSGT00940000159561"/>
<dbReference type="InParanoid" id="Q6SJ95"/>
<dbReference type="OMA" id="XAKERSE"/>
<dbReference type="OrthoDB" id="2127950at2759"/>
<dbReference type="PhylomeDB" id="Q6SJ95"/>
<dbReference type="TreeFam" id="TF300102"/>
<dbReference type="BioGRID-ORCS" id="227606">
    <property type="hits" value="0 hits in 76 CRISPR screens"/>
</dbReference>
<dbReference type="PRO" id="PR:Q6SJ95"/>
<dbReference type="Proteomes" id="UP000000589">
    <property type="component" value="Chromosome 2"/>
</dbReference>
<dbReference type="RNAct" id="Q6SJ95">
    <property type="molecule type" value="protein"/>
</dbReference>
<dbReference type="Bgee" id="ENSMUSG00000061809">
    <property type="expression patterns" value="Expressed in blastoderm cell in morula and 6 other cell types or tissues"/>
</dbReference>
<dbReference type="ExpressionAtlas" id="Q6SJ95">
    <property type="expression patterns" value="baseline and differential"/>
</dbReference>
<dbReference type="GO" id="GO:0005737">
    <property type="term" value="C:cytoplasm"/>
    <property type="evidence" value="ECO:0000314"/>
    <property type="project" value="MGI"/>
</dbReference>
<dbReference type="GO" id="GO:0001674">
    <property type="term" value="C:female germ cell nucleus"/>
    <property type="evidence" value="ECO:0000314"/>
    <property type="project" value="MGI"/>
</dbReference>
<dbReference type="GO" id="GO:0005634">
    <property type="term" value="C:nucleus"/>
    <property type="evidence" value="ECO:0000314"/>
    <property type="project" value="MGI"/>
</dbReference>
<dbReference type="GO" id="GO:0003677">
    <property type="term" value="F:DNA binding"/>
    <property type="evidence" value="ECO:0000314"/>
    <property type="project" value="MGI"/>
</dbReference>
<dbReference type="GO" id="GO:0006352">
    <property type="term" value="P:DNA-templated transcription initiation"/>
    <property type="evidence" value="ECO:0007669"/>
    <property type="project" value="InterPro"/>
</dbReference>
<dbReference type="CDD" id="cd04516">
    <property type="entry name" value="TBP_eukaryotes"/>
    <property type="match status" value="1"/>
</dbReference>
<dbReference type="FunFam" id="3.30.310.10:FF:000001">
    <property type="entry name" value="TATA-box-binding protein 2"/>
    <property type="match status" value="1"/>
</dbReference>
<dbReference type="FunFam" id="3.30.310.10:FF:000002">
    <property type="entry name" value="TATA-box-binding protein 2"/>
    <property type="match status" value="1"/>
</dbReference>
<dbReference type="Gene3D" id="3.30.310.10">
    <property type="entry name" value="TATA-Binding Protein"/>
    <property type="match status" value="2"/>
</dbReference>
<dbReference type="HAMAP" id="MF_00408">
    <property type="entry name" value="TATA_bind_prot_arch"/>
    <property type="match status" value="1"/>
</dbReference>
<dbReference type="InterPro" id="IPR000814">
    <property type="entry name" value="TBP"/>
</dbReference>
<dbReference type="InterPro" id="IPR030491">
    <property type="entry name" value="TBP_CS"/>
</dbReference>
<dbReference type="InterPro" id="IPR012295">
    <property type="entry name" value="TBP_dom_sf"/>
</dbReference>
<dbReference type="InterPro" id="IPR033710">
    <property type="entry name" value="TBP_eukaryotic"/>
</dbReference>
<dbReference type="PANTHER" id="PTHR10126">
    <property type="entry name" value="TATA-BOX BINDING PROTEIN"/>
    <property type="match status" value="1"/>
</dbReference>
<dbReference type="Pfam" id="PF00352">
    <property type="entry name" value="TBP"/>
    <property type="match status" value="2"/>
</dbReference>
<dbReference type="PRINTS" id="PR00686">
    <property type="entry name" value="TIFACTORIID"/>
</dbReference>
<dbReference type="SUPFAM" id="SSF55945">
    <property type="entry name" value="TATA-box binding protein-like"/>
    <property type="match status" value="2"/>
</dbReference>
<dbReference type="PROSITE" id="PS00351">
    <property type="entry name" value="TFIID"/>
    <property type="match status" value="2"/>
</dbReference>
<accession>Q6SJ95</accession>
<accession>A2AQK6</accession>
<accession>Q498A1</accession>
<gene>
    <name evidence="12" type="primary">Tbpl2</name>
    <name type="synonym">Tbp2</name>
    <name evidence="10 12" type="synonym">Trf3</name>
</gene>
<evidence type="ECO:0000250" key="1">
    <source>
        <dbReference type="UniProtKB" id="Q6SJ96"/>
    </source>
</evidence>
<evidence type="ECO:0000255" key="2"/>
<evidence type="ECO:0000256" key="3">
    <source>
        <dbReference type="SAM" id="MobiDB-lite"/>
    </source>
</evidence>
<evidence type="ECO:0000269" key="4">
    <source>
    </source>
</evidence>
<evidence type="ECO:0000269" key="5">
    <source>
    </source>
</evidence>
<evidence type="ECO:0000269" key="6">
    <source>
    </source>
</evidence>
<evidence type="ECO:0000269" key="7">
    <source>
    </source>
</evidence>
<evidence type="ECO:0000305" key="8"/>
<evidence type="ECO:0000312" key="9">
    <source>
        <dbReference type="EMBL" id="AAI19161.1"/>
    </source>
</evidence>
<evidence type="ECO:0000312" key="10">
    <source>
        <dbReference type="EMBL" id="AAR24282.1"/>
    </source>
</evidence>
<evidence type="ECO:0000312" key="11">
    <source>
        <dbReference type="EMBL" id="DAA06033.1"/>
    </source>
</evidence>
<evidence type="ECO:0000312" key="12">
    <source>
        <dbReference type="MGI" id="MGI:2684058"/>
    </source>
</evidence>
<protein>
    <recommendedName>
        <fullName>TATA box-binding protein-like 2</fullName>
        <shortName>TBP-like 2</shortName>
    </recommendedName>
    <alternativeName>
        <fullName>TATA box-binding protein-related factor 3</fullName>
        <shortName>TBP-related factor 3</shortName>
    </alternativeName>
</protein>
<reference evidence="8 10" key="1">
    <citation type="journal article" date="2003" name="Proc. Natl. Acad. Sci. U.S.A.">
        <title>TRF3, a TATA-box-binding protein-related factor, is vertebrate-specific and widely expressed.</title>
        <authorList>
            <person name="Persengiev S.P."/>
            <person name="Zhu X."/>
            <person name="Dixit B.L."/>
            <person name="Maston G.A."/>
            <person name="Kittler E.L.W."/>
            <person name="Green M.R."/>
        </authorList>
    </citation>
    <scope>NUCLEOTIDE SEQUENCE [MRNA]</scope>
    <scope>TISSUE SPECIFICITY</scope>
    <source>
        <strain evidence="10">Swiss Webster</strain>
    </source>
</reference>
<reference evidence="11" key="2">
    <citation type="journal article" date="2007" name="DNA Cell Biol.">
        <title>Genomics, evolution, and expression of TBPL2, a member of the TBP family.</title>
        <authorList>
            <person name="Di Pietro C."/>
            <person name="Ragusa M."/>
            <person name="Duro L."/>
            <person name="Guglielmino M.R."/>
            <person name="Barbagallo D."/>
            <person name="Carnemolla A."/>
            <person name="Lagana A."/>
            <person name="Buffa P."/>
            <person name="Angelica R."/>
            <person name="Rinaldi A."/>
            <person name="Calafato M.S."/>
            <person name="Milicia I."/>
            <person name="Caserta C."/>
            <person name="Giugno R."/>
            <person name="Pulvirenti A."/>
            <person name="Giunta V."/>
            <person name="Rapisarda A."/>
            <person name="Di Pietro V."/>
            <person name="Grillo A."/>
            <person name="Messina A."/>
            <person name="Ferro A."/>
            <person name="Grzeschik K.H."/>
            <person name="Purrello M."/>
        </authorList>
    </citation>
    <scope>NUCLEOTIDE SEQUENCE [MRNA]</scope>
</reference>
<reference key="3">
    <citation type="journal article" date="2009" name="PLoS Biol.">
        <title>Lineage-specific biology revealed by a finished genome assembly of the mouse.</title>
        <authorList>
            <person name="Church D.M."/>
            <person name="Goodstadt L."/>
            <person name="Hillier L.W."/>
            <person name="Zody M.C."/>
            <person name="Goldstein S."/>
            <person name="She X."/>
            <person name="Bult C.J."/>
            <person name="Agarwala R."/>
            <person name="Cherry J.L."/>
            <person name="DiCuccio M."/>
            <person name="Hlavina W."/>
            <person name="Kapustin Y."/>
            <person name="Meric P."/>
            <person name="Maglott D."/>
            <person name="Birtle Z."/>
            <person name="Marques A.C."/>
            <person name="Graves T."/>
            <person name="Zhou S."/>
            <person name="Teague B."/>
            <person name="Potamousis K."/>
            <person name="Churas C."/>
            <person name="Place M."/>
            <person name="Herschleb J."/>
            <person name="Runnheim R."/>
            <person name="Forrest D."/>
            <person name="Amos-Landgraf J."/>
            <person name="Schwartz D.C."/>
            <person name="Cheng Z."/>
            <person name="Lindblad-Toh K."/>
            <person name="Eichler E.E."/>
            <person name="Ponting C.P."/>
        </authorList>
    </citation>
    <scope>NUCLEOTIDE SEQUENCE [LARGE SCALE GENOMIC DNA]</scope>
    <source>
        <strain>C57BL/6J</strain>
    </source>
</reference>
<reference evidence="9" key="4">
    <citation type="journal article" date="2004" name="Genome Res.">
        <title>The status, quality, and expansion of the NIH full-length cDNA project: the Mammalian Gene Collection (MGC).</title>
        <authorList>
            <consortium name="The MGC Project Team"/>
        </authorList>
    </citation>
    <scope>NUCLEOTIDE SEQUENCE [LARGE SCALE MRNA]</scope>
    <source>
        <strain>C57B16/J</strain>
        <tissue>Oocyte</tissue>
    </source>
</reference>
<reference key="5">
    <citation type="journal article" date="2004" name="Curr. Biol.">
        <title>TBP2, a vertebrate-specific member of the TBP family, is required in embryonic development of zebrafish.</title>
        <authorList>
            <person name="Bartfai R."/>
            <person name="Balduf C."/>
            <person name="Hilton T."/>
            <person name="Rathmann Y."/>
            <person name="Hadzhiev Y."/>
            <person name="Tora L."/>
            <person name="Orban L."/>
            <person name="Mueller F."/>
        </authorList>
    </citation>
    <scope>TISSUE SPECIFICITY</scope>
</reference>
<reference key="6">
    <citation type="journal article" date="2006" name="Gene Expr. Patterns">
        <title>Developmental and cell type-specific regulation of core promoter transcription factors in germ cells of frogs and mice.</title>
        <authorList>
            <person name="Xiao L."/>
            <person name="Kim M."/>
            <person name="DeJong J."/>
        </authorList>
    </citation>
    <scope>TISSUE SPECIFICITY</scope>
</reference>
<reference evidence="8" key="7">
    <citation type="journal article" date="2007" name="Genes Dev.">
        <title>Switching of the core transcription machinery during myogenesis.</title>
        <authorList>
            <person name="Deato M.D.E."/>
            <person name="Tjian R."/>
        </authorList>
    </citation>
    <scope>FUNCTION</scope>
    <scope>INTERACTION WITH TAF3</scope>
    <scope>SUBCELLULAR LOCATION</scope>
    <scope>TISSUE SPECIFICITY</scope>
</reference>
<feature type="chain" id="PRO_0000318119" description="TATA box-binding protein-like 2">
    <location>
        <begin position="1"/>
        <end position="350"/>
    </location>
</feature>
<feature type="region of interest" description="Disordered" evidence="3">
    <location>
        <begin position="82"/>
        <end position="150"/>
    </location>
</feature>
<feature type="compositionally biased region" description="Basic and acidic residues" evidence="3">
    <location>
        <begin position="94"/>
        <end position="116"/>
    </location>
</feature>
<feature type="compositionally biased region" description="Polar residues" evidence="3">
    <location>
        <begin position="118"/>
        <end position="128"/>
    </location>
</feature>
<feature type="compositionally biased region" description="Polar residues" evidence="3">
    <location>
        <begin position="139"/>
        <end position="150"/>
    </location>
</feature>
<feature type="sequence conflict" description="In Ref. 2; DAA06033, 3; CAM19021 and 4; AAI00306." evidence="8" ref="2 3 4">
    <location>
        <position position="294"/>
    </location>
</feature>